<protein>
    <recommendedName>
        <fullName evidence="1">Large ribosomal subunit protein uL18</fullName>
    </recommendedName>
    <alternativeName>
        <fullName evidence="3">50S ribosomal protein L18</fullName>
    </alternativeName>
</protein>
<comment type="function">
    <text evidence="1">This is one of the proteins that bind and probably mediate the attachment of the 5S RNA into the large ribosomal subunit, where it forms part of the central protuberance.</text>
</comment>
<comment type="subunit">
    <text evidence="1">Part of the 50S ribosomal subunit; part of the 5S rRNA/L5/L18/L25 subcomplex. Contacts the 5S and 23S rRNAs.</text>
</comment>
<comment type="similarity">
    <text evidence="1">Belongs to the universal ribosomal protein uL18 family.</text>
</comment>
<evidence type="ECO:0000255" key="1">
    <source>
        <dbReference type="HAMAP-Rule" id="MF_01337"/>
    </source>
</evidence>
<evidence type="ECO:0000256" key="2">
    <source>
        <dbReference type="SAM" id="MobiDB-lite"/>
    </source>
</evidence>
<evidence type="ECO:0000305" key="3"/>
<keyword id="KW-1185">Reference proteome</keyword>
<keyword id="KW-0687">Ribonucleoprotein</keyword>
<keyword id="KW-0689">Ribosomal protein</keyword>
<keyword id="KW-0694">RNA-binding</keyword>
<keyword id="KW-0699">rRNA-binding</keyword>
<sequence>MLKKADKNANRLQRHKRVRRKISGTSQRPRLCVFRSANNIYAQIIDDTKRVTLVAASSLEAEVKSAVNHTGNKEAAKKVGELVAKKAVEKGITEVVFDRGGYLYHGRIQELAEGAREAGLKF</sequence>
<name>RL18_CLOD6</name>
<proteinExistence type="inferred from homology"/>
<reference key="1">
    <citation type="journal article" date="2006" name="Nat. Genet.">
        <title>The multidrug-resistant human pathogen Clostridium difficile has a highly mobile, mosaic genome.</title>
        <authorList>
            <person name="Sebaihia M."/>
            <person name="Wren B.W."/>
            <person name="Mullany P."/>
            <person name="Fairweather N.F."/>
            <person name="Minton N."/>
            <person name="Stabler R."/>
            <person name="Thomson N.R."/>
            <person name="Roberts A.P."/>
            <person name="Cerdeno-Tarraga A.M."/>
            <person name="Wang H."/>
            <person name="Holden M.T.G."/>
            <person name="Wright A."/>
            <person name="Churcher C."/>
            <person name="Quail M.A."/>
            <person name="Baker S."/>
            <person name="Bason N."/>
            <person name="Brooks K."/>
            <person name="Chillingworth T."/>
            <person name="Cronin A."/>
            <person name="Davis P."/>
            <person name="Dowd L."/>
            <person name="Fraser A."/>
            <person name="Feltwell T."/>
            <person name="Hance Z."/>
            <person name="Holroyd S."/>
            <person name="Jagels K."/>
            <person name="Moule S."/>
            <person name="Mungall K."/>
            <person name="Price C."/>
            <person name="Rabbinowitsch E."/>
            <person name="Sharp S."/>
            <person name="Simmonds M."/>
            <person name="Stevens K."/>
            <person name="Unwin L."/>
            <person name="Whithead S."/>
            <person name="Dupuy B."/>
            <person name="Dougan G."/>
            <person name="Barrell B."/>
            <person name="Parkhill J."/>
        </authorList>
    </citation>
    <scope>NUCLEOTIDE SEQUENCE [LARGE SCALE GENOMIC DNA]</scope>
    <source>
        <strain>630</strain>
    </source>
</reference>
<organism>
    <name type="scientific">Clostridioides difficile (strain 630)</name>
    <name type="common">Peptoclostridium difficile</name>
    <dbReference type="NCBI Taxonomy" id="272563"/>
    <lineage>
        <taxon>Bacteria</taxon>
        <taxon>Bacillati</taxon>
        <taxon>Bacillota</taxon>
        <taxon>Clostridia</taxon>
        <taxon>Peptostreptococcales</taxon>
        <taxon>Peptostreptococcaceae</taxon>
        <taxon>Clostridioides</taxon>
    </lineage>
</organism>
<dbReference type="EMBL" id="AM180355">
    <property type="protein sequence ID" value="CAJ66904.1"/>
    <property type="molecule type" value="Genomic_DNA"/>
</dbReference>
<dbReference type="RefSeq" id="WP_003421141.1">
    <property type="nucleotide sequence ID" value="NZ_JAUPES010000043.1"/>
</dbReference>
<dbReference type="RefSeq" id="YP_001086553.1">
    <property type="nucleotide sequence ID" value="NC_009089.1"/>
</dbReference>
<dbReference type="SMR" id="Q18CH4"/>
<dbReference type="STRING" id="272563.CD630_00870"/>
<dbReference type="EnsemblBacteria" id="CAJ66904">
    <property type="protein sequence ID" value="CAJ66904"/>
    <property type="gene ID" value="CD630_00870"/>
</dbReference>
<dbReference type="GeneID" id="66352587"/>
<dbReference type="KEGG" id="cdf:CD630_00870"/>
<dbReference type="KEGG" id="pdc:CDIF630_00155"/>
<dbReference type="PATRIC" id="fig|272563.120.peg.95"/>
<dbReference type="eggNOG" id="COG0256">
    <property type="taxonomic scope" value="Bacteria"/>
</dbReference>
<dbReference type="OrthoDB" id="9810939at2"/>
<dbReference type="PhylomeDB" id="Q18CH4"/>
<dbReference type="BioCyc" id="PDIF272563:G12WB-143-MONOMER"/>
<dbReference type="Proteomes" id="UP000001978">
    <property type="component" value="Chromosome"/>
</dbReference>
<dbReference type="GO" id="GO:0022625">
    <property type="term" value="C:cytosolic large ribosomal subunit"/>
    <property type="evidence" value="ECO:0007669"/>
    <property type="project" value="TreeGrafter"/>
</dbReference>
<dbReference type="GO" id="GO:0008097">
    <property type="term" value="F:5S rRNA binding"/>
    <property type="evidence" value="ECO:0007669"/>
    <property type="project" value="TreeGrafter"/>
</dbReference>
<dbReference type="GO" id="GO:0003735">
    <property type="term" value="F:structural constituent of ribosome"/>
    <property type="evidence" value="ECO:0007669"/>
    <property type="project" value="InterPro"/>
</dbReference>
<dbReference type="GO" id="GO:0006412">
    <property type="term" value="P:translation"/>
    <property type="evidence" value="ECO:0007669"/>
    <property type="project" value="UniProtKB-UniRule"/>
</dbReference>
<dbReference type="CDD" id="cd00432">
    <property type="entry name" value="Ribosomal_L18_L5e"/>
    <property type="match status" value="1"/>
</dbReference>
<dbReference type="FunFam" id="3.30.420.100:FF:000001">
    <property type="entry name" value="50S ribosomal protein L18"/>
    <property type="match status" value="1"/>
</dbReference>
<dbReference type="Gene3D" id="3.30.420.100">
    <property type="match status" value="1"/>
</dbReference>
<dbReference type="HAMAP" id="MF_01337_B">
    <property type="entry name" value="Ribosomal_uL18_B"/>
    <property type="match status" value="1"/>
</dbReference>
<dbReference type="InterPro" id="IPR004389">
    <property type="entry name" value="Ribosomal_uL18_bac-type"/>
</dbReference>
<dbReference type="InterPro" id="IPR005484">
    <property type="entry name" value="Ribosomal_uL18_bac/euk"/>
</dbReference>
<dbReference type="NCBIfam" id="TIGR00060">
    <property type="entry name" value="L18_bact"/>
    <property type="match status" value="1"/>
</dbReference>
<dbReference type="PANTHER" id="PTHR12899">
    <property type="entry name" value="39S RIBOSOMAL PROTEIN L18, MITOCHONDRIAL"/>
    <property type="match status" value="1"/>
</dbReference>
<dbReference type="PANTHER" id="PTHR12899:SF3">
    <property type="entry name" value="LARGE RIBOSOMAL SUBUNIT PROTEIN UL18M"/>
    <property type="match status" value="1"/>
</dbReference>
<dbReference type="Pfam" id="PF00861">
    <property type="entry name" value="Ribosomal_L18p"/>
    <property type="match status" value="1"/>
</dbReference>
<dbReference type="SUPFAM" id="SSF53137">
    <property type="entry name" value="Translational machinery components"/>
    <property type="match status" value="1"/>
</dbReference>
<gene>
    <name evidence="1" type="primary">rplR</name>
    <name type="ordered locus">CD630_00870</name>
</gene>
<feature type="chain" id="PRO_1000053015" description="Large ribosomal subunit protein uL18">
    <location>
        <begin position="1"/>
        <end position="122"/>
    </location>
</feature>
<feature type="region of interest" description="Disordered" evidence="2">
    <location>
        <begin position="1"/>
        <end position="24"/>
    </location>
</feature>
<feature type="compositionally biased region" description="Basic residues" evidence="2">
    <location>
        <begin position="12"/>
        <end position="22"/>
    </location>
</feature>
<accession>Q18CH4</accession>